<comment type="function">
    <text evidence="1">Probably phosphorylates lipids; the in vivo substrate is unknown.</text>
</comment>
<comment type="cofactor">
    <cofactor evidence="1">
        <name>Mg(2+)</name>
        <dbReference type="ChEBI" id="CHEBI:18420"/>
    </cofactor>
    <cofactor evidence="1">
        <name>Ca(2+)</name>
        <dbReference type="ChEBI" id="CHEBI:29108"/>
    </cofactor>
    <text evidence="1">Binds 1 Mg(2+) ion per subunit. Ca(2+) may be able to substitute.</text>
</comment>
<comment type="subcellular location">
    <subcellularLocation>
        <location evidence="1">Cytoplasm</location>
    </subcellularLocation>
</comment>
<comment type="similarity">
    <text evidence="1">Belongs to the diacylglycerol/lipid kinase family. YegS lipid kinase subfamily.</text>
</comment>
<organism>
    <name type="scientific">Escherichia coli (strain SE11)</name>
    <dbReference type="NCBI Taxonomy" id="409438"/>
    <lineage>
        <taxon>Bacteria</taxon>
        <taxon>Pseudomonadati</taxon>
        <taxon>Pseudomonadota</taxon>
        <taxon>Gammaproteobacteria</taxon>
        <taxon>Enterobacterales</taxon>
        <taxon>Enterobacteriaceae</taxon>
        <taxon>Escherichia</taxon>
    </lineage>
</organism>
<name>YEGS_ECOSE</name>
<dbReference type="EC" id="2.7.1.-" evidence="1"/>
<dbReference type="EMBL" id="AP009240">
    <property type="protein sequence ID" value="BAG77882.1"/>
    <property type="molecule type" value="Genomic_DNA"/>
</dbReference>
<dbReference type="RefSeq" id="WP_000807362.1">
    <property type="nucleotide sequence ID" value="NC_011415.1"/>
</dbReference>
<dbReference type="SMR" id="B6HYT0"/>
<dbReference type="GeneID" id="75205975"/>
<dbReference type="KEGG" id="ecy:ECSE_2358"/>
<dbReference type="HOGENOM" id="CLU_045532_1_1_6"/>
<dbReference type="Proteomes" id="UP000008199">
    <property type="component" value="Chromosome"/>
</dbReference>
<dbReference type="GO" id="GO:0005737">
    <property type="term" value="C:cytoplasm"/>
    <property type="evidence" value="ECO:0007669"/>
    <property type="project" value="UniProtKB-SubCell"/>
</dbReference>
<dbReference type="GO" id="GO:0005886">
    <property type="term" value="C:plasma membrane"/>
    <property type="evidence" value="ECO:0007669"/>
    <property type="project" value="TreeGrafter"/>
</dbReference>
<dbReference type="GO" id="GO:0005524">
    <property type="term" value="F:ATP binding"/>
    <property type="evidence" value="ECO:0007669"/>
    <property type="project" value="UniProtKB-UniRule"/>
</dbReference>
<dbReference type="GO" id="GO:0001727">
    <property type="term" value="F:lipid kinase activity"/>
    <property type="evidence" value="ECO:0007669"/>
    <property type="project" value="UniProtKB-UniRule"/>
</dbReference>
<dbReference type="GO" id="GO:0000287">
    <property type="term" value="F:magnesium ion binding"/>
    <property type="evidence" value="ECO:0007669"/>
    <property type="project" value="UniProtKB-UniRule"/>
</dbReference>
<dbReference type="GO" id="GO:0008654">
    <property type="term" value="P:phospholipid biosynthetic process"/>
    <property type="evidence" value="ECO:0007669"/>
    <property type="project" value="UniProtKB-UniRule"/>
</dbReference>
<dbReference type="FunFam" id="2.60.200.40:FF:000008">
    <property type="entry name" value="Probable lipid kinase YegS"/>
    <property type="match status" value="1"/>
</dbReference>
<dbReference type="FunFam" id="3.40.50.10330:FF:000008">
    <property type="entry name" value="Probable lipid kinase YegS"/>
    <property type="match status" value="1"/>
</dbReference>
<dbReference type="Gene3D" id="2.60.200.40">
    <property type="match status" value="1"/>
</dbReference>
<dbReference type="Gene3D" id="3.40.50.10330">
    <property type="entry name" value="Probable inorganic polyphosphate/atp-NAD kinase, domain 1"/>
    <property type="match status" value="1"/>
</dbReference>
<dbReference type="HAMAP" id="MF_01377">
    <property type="entry name" value="YegS"/>
    <property type="match status" value="1"/>
</dbReference>
<dbReference type="InterPro" id="IPR017438">
    <property type="entry name" value="ATP-NAD_kinase_N"/>
</dbReference>
<dbReference type="InterPro" id="IPR005218">
    <property type="entry name" value="Diacylglycerol/lipid_kinase"/>
</dbReference>
<dbReference type="InterPro" id="IPR001206">
    <property type="entry name" value="Diacylglycerol_kinase_cat_dom"/>
</dbReference>
<dbReference type="InterPro" id="IPR022433">
    <property type="entry name" value="Lip_kinase_YegS"/>
</dbReference>
<dbReference type="InterPro" id="IPR050187">
    <property type="entry name" value="Lipid_Phosphate_FormReg"/>
</dbReference>
<dbReference type="InterPro" id="IPR016064">
    <property type="entry name" value="NAD/diacylglycerol_kinase_sf"/>
</dbReference>
<dbReference type="InterPro" id="IPR045540">
    <property type="entry name" value="YegS/DAGK_C"/>
</dbReference>
<dbReference type="NCBIfam" id="TIGR03702">
    <property type="entry name" value="lip_kinase_YegS"/>
    <property type="match status" value="1"/>
</dbReference>
<dbReference type="NCBIfam" id="NF009602">
    <property type="entry name" value="PRK13054.1"/>
    <property type="match status" value="1"/>
</dbReference>
<dbReference type="NCBIfam" id="TIGR00147">
    <property type="entry name" value="YegS/Rv2252/BmrU family lipid kinase"/>
    <property type="match status" value="1"/>
</dbReference>
<dbReference type="PANTHER" id="PTHR12358:SF106">
    <property type="entry name" value="LIPID KINASE YEGS"/>
    <property type="match status" value="1"/>
</dbReference>
<dbReference type="PANTHER" id="PTHR12358">
    <property type="entry name" value="SPHINGOSINE KINASE"/>
    <property type="match status" value="1"/>
</dbReference>
<dbReference type="Pfam" id="PF00781">
    <property type="entry name" value="DAGK_cat"/>
    <property type="match status" value="1"/>
</dbReference>
<dbReference type="Pfam" id="PF19279">
    <property type="entry name" value="YegS_C"/>
    <property type="match status" value="1"/>
</dbReference>
<dbReference type="SMART" id="SM00046">
    <property type="entry name" value="DAGKc"/>
    <property type="match status" value="1"/>
</dbReference>
<dbReference type="SUPFAM" id="SSF111331">
    <property type="entry name" value="NAD kinase/diacylglycerol kinase-like"/>
    <property type="match status" value="1"/>
</dbReference>
<dbReference type="PROSITE" id="PS50146">
    <property type="entry name" value="DAGK"/>
    <property type="match status" value="1"/>
</dbReference>
<gene>
    <name evidence="1" type="primary">yegS</name>
    <name type="ordered locus">ECSE_2358</name>
</gene>
<keyword id="KW-0067">ATP-binding</keyword>
<keyword id="KW-0963">Cytoplasm</keyword>
<keyword id="KW-0418">Kinase</keyword>
<keyword id="KW-0444">Lipid biosynthesis</keyword>
<keyword id="KW-0443">Lipid metabolism</keyword>
<keyword id="KW-0460">Magnesium</keyword>
<keyword id="KW-0479">Metal-binding</keyword>
<keyword id="KW-0547">Nucleotide-binding</keyword>
<keyword id="KW-0594">Phospholipid biosynthesis</keyword>
<keyword id="KW-1208">Phospholipid metabolism</keyword>
<keyword id="KW-0808">Transferase</keyword>
<proteinExistence type="inferred from homology"/>
<sequence length="299" mass="31988">MAEFPASLLILNGKSTDNLPLREAIMLLREEGMTIHVRVTWEKGDAARYVEEARKLGVATVIAGGGDGTINEVSTALIQCEGDDIPALGILPLGTANDFATSVGIPEALDKALKLAIAGNAIAIDMAQVNKQTCFINMATGGFGTRITTETPEKLKAALGGVSYIIHGLMRMDTLQPDRCEIRGENFHWQGDALVIGIGNGRQAGGGQQLCPNALINDGLLQLRIFTGDEILPALVSTLKSDEDNPNIIEGASSWFDIQAPHEITFNLDGEPLSGQNFHIEILPAALRCRLPPDCPLLR</sequence>
<protein>
    <recommendedName>
        <fullName evidence="1">Probable lipid kinase YegS</fullName>
        <ecNumber evidence="1">2.7.1.-</ecNumber>
    </recommendedName>
</protein>
<accession>B6HYT0</accession>
<reference key="1">
    <citation type="journal article" date="2008" name="DNA Res.">
        <title>Complete genome sequence and comparative analysis of the wild-type commensal Escherichia coli strain SE11 isolated from a healthy adult.</title>
        <authorList>
            <person name="Oshima K."/>
            <person name="Toh H."/>
            <person name="Ogura Y."/>
            <person name="Sasamoto H."/>
            <person name="Morita H."/>
            <person name="Park S.-H."/>
            <person name="Ooka T."/>
            <person name="Iyoda S."/>
            <person name="Taylor T.D."/>
            <person name="Hayashi T."/>
            <person name="Itoh K."/>
            <person name="Hattori M."/>
        </authorList>
    </citation>
    <scope>NUCLEOTIDE SEQUENCE [LARGE SCALE GENOMIC DNA]</scope>
    <source>
        <strain>SE11</strain>
    </source>
</reference>
<evidence type="ECO:0000255" key="1">
    <source>
        <dbReference type="HAMAP-Rule" id="MF_01377"/>
    </source>
</evidence>
<feature type="chain" id="PRO_1000144868" description="Probable lipid kinase YegS">
    <location>
        <begin position="1"/>
        <end position="299"/>
    </location>
</feature>
<feature type="domain" description="DAGKc" evidence="1">
    <location>
        <begin position="2"/>
        <end position="133"/>
    </location>
</feature>
<feature type="active site" description="Proton acceptor" evidence="1">
    <location>
        <position position="271"/>
    </location>
</feature>
<feature type="binding site" evidence="1">
    <location>
        <position position="40"/>
    </location>
    <ligand>
        <name>ATP</name>
        <dbReference type="ChEBI" id="CHEBI:30616"/>
    </ligand>
</feature>
<feature type="binding site" evidence="1">
    <location>
        <begin position="66"/>
        <end position="72"/>
    </location>
    <ligand>
        <name>ATP</name>
        <dbReference type="ChEBI" id="CHEBI:30616"/>
    </ligand>
</feature>
<feature type="binding site" evidence="1">
    <location>
        <position position="95"/>
    </location>
    <ligand>
        <name>ATP</name>
        <dbReference type="ChEBI" id="CHEBI:30616"/>
    </ligand>
</feature>
<feature type="binding site" evidence="1">
    <location>
        <position position="215"/>
    </location>
    <ligand>
        <name>Mg(2+)</name>
        <dbReference type="ChEBI" id="CHEBI:18420"/>
    </ligand>
</feature>
<feature type="binding site" evidence="1">
    <location>
        <position position="218"/>
    </location>
    <ligand>
        <name>Mg(2+)</name>
        <dbReference type="ChEBI" id="CHEBI:18420"/>
    </ligand>
</feature>
<feature type="binding site" evidence="1">
    <location>
        <position position="220"/>
    </location>
    <ligand>
        <name>Mg(2+)</name>
        <dbReference type="ChEBI" id="CHEBI:18420"/>
    </ligand>
</feature>